<feature type="chain" id="PRO_0000102896" description="SsrA-binding protein">
    <location>
        <begin position="1"/>
        <end position="160"/>
    </location>
</feature>
<feature type="region of interest" description="Disordered" evidence="2">
    <location>
        <begin position="131"/>
        <end position="160"/>
    </location>
</feature>
<proteinExistence type="inferred from homology"/>
<accession>Q8KTI4</accession>
<organism>
    <name type="scientific">Azotobacter vinelandii</name>
    <dbReference type="NCBI Taxonomy" id="354"/>
    <lineage>
        <taxon>Bacteria</taxon>
        <taxon>Pseudomonadati</taxon>
        <taxon>Pseudomonadota</taxon>
        <taxon>Gammaproteobacteria</taxon>
        <taxon>Pseudomonadales</taxon>
        <taxon>Pseudomonadaceae</taxon>
        <taxon>Azotobacter</taxon>
    </lineage>
</organism>
<reference key="1">
    <citation type="submission" date="2002-03" db="EMBL/GenBank/DDBJ databases">
        <title>The Azotobacter fur gene.</title>
        <authorList>
            <person name="Page W.J."/>
            <person name="Macyk A.S."/>
            <person name="Tindale A.E."/>
        </authorList>
    </citation>
    <scope>NUCLEOTIDE SEQUENCE [GENOMIC DNA]</scope>
    <source>
        <strain>ATCC 13705 / OP1 / DSM 366 / NCIMB 11614 / LMG 3878 / UW</strain>
    </source>
</reference>
<dbReference type="EMBL" id="AF490983">
    <property type="protein sequence ID" value="AAN03803.1"/>
    <property type="molecule type" value="Genomic_DNA"/>
</dbReference>
<dbReference type="RefSeq" id="WP_012702794.1">
    <property type="nucleotide sequence ID" value="NZ_FPKM01000017.1"/>
</dbReference>
<dbReference type="SMR" id="Q8KTI4"/>
<dbReference type="GeneID" id="88187219"/>
<dbReference type="OMA" id="WTNHSAR"/>
<dbReference type="GO" id="GO:0005829">
    <property type="term" value="C:cytosol"/>
    <property type="evidence" value="ECO:0007669"/>
    <property type="project" value="TreeGrafter"/>
</dbReference>
<dbReference type="GO" id="GO:0003723">
    <property type="term" value="F:RNA binding"/>
    <property type="evidence" value="ECO:0007669"/>
    <property type="project" value="UniProtKB-UniRule"/>
</dbReference>
<dbReference type="GO" id="GO:0070929">
    <property type="term" value="P:trans-translation"/>
    <property type="evidence" value="ECO:0007669"/>
    <property type="project" value="UniProtKB-UniRule"/>
</dbReference>
<dbReference type="CDD" id="cd09294">
    <property type="entry name" value="SmpB"/>
    <property type="match status" value="1"/>
</dbReference>
<dbReference type="Gene3D" id="2.40.280.10">
    <property type="match status" value="1"/>
</dbReference>
<dbReference type="HAMAP" id="MF_00023">
    <property type="entry name" value="SmpB"/>
    <property type="match status" value="1"/>
</dbReference>
<dbReference type="InterPro" id="IPR023620">
    <property type="entry name" value="SmpB"/>
</dbReference>
<dbReference type="InterPro" id="IPR000037">
    <property type="entry name" value="SsrA-bd_prot"/>
</dbReference>
<dbReference type="InterPro" id="IPR020081">
    <property type="entry name" value="SsrA-bd_prot_CS"/>
</dbReference>
<dbReference type="NCBIfam" id="NF003843">
    <property type="entry name" value="PRK05422.1"/>
    <property type="match status" value="1"/>
</dbReference>
<dbReference type="NCBIfam" id="TIGR00086">
    <property type="entry name" value="smpB"/>
    <property type="match status" value="1"/>
</dbReference>
<dbReference type="PANTHER" id="PTHR30308:SF2">
    <property type="entry name" value="SSRA-BINDING PROTEIN"/>
    <property type="match status" value="1"/>
</dbReference>
<dbReference type="PANTHER" id="PTHR30308">
    <property type="entry name" value="TMRNA-BINDING COMPONENT OF TRANS-TRANSLATION TAGGING COMPLEX"/>
    <property type="match status" value="1"/>
</dbReference>
<dbReference type="Pfam" id="PF01668">
    <property type="entry name" value="SmpB"/>
    <property type="match status" value="1"/>
</dbReference>
<dbReference type="SUPFAM" id="SSF74982">
    <property type="entry name" value="Small protein B (SmpB)"/>
    <property type="match status" value="1"/>
</dbReference>
<dbReference type="PROSITE" id="PS01317">
    <property type="entry name" value="SSRP"/>
    <property type="match status" value="1"/>
</dbReference>
<name>SSRP_AZOVI</name>
<comment type="function">
    <text evidence="1">Required for rescue of stalled ribosomes mediated by trans-translation. Binds to transfer-messenger RNA (tmRNA), required for stable association of tmRNA with ribosomes. tmRNA and SmpB together mimic tRNA shape, replacing the anticodon stem-loop with SmpB. tmRNA is encoded by the ssrA gene; the 2 termini fold to resemble tRNA(Ala) and it encodes a 'tag peptide', a short internal open reading frame. During trans-translation Ala-aminoacylated tmRNA acts like a tRNA, entering the A-site of stalled ribosomes, displacing the stalled mRNA. The ribosome then switches to translate the ORF on the tmRNA; the nascent peptide is terminated with the 'tag peptide' encoded by the tmRNA and targeted for degradation. The ribosome is freed to recommence translation, which seems to be the essential function of trans-translation.</text>
</comment>
<comment type="subcellular location">
    <subcellularLocation>
        <location evidence="1">Cytoplasm</location>
    </subcellularLocation>
    <text evidence="1">The tmRNA-SmpB complex associates with stalled 70S ribosomes.</text>
</comment>
<comment type="similarity">
    <text evidence="1">Belongs to the SmpB family.</text>
</comment>
<keyword id="KW-0963">Cytoplasm</keyword>
<keyword id="KW-0694">RNA-binding</keyword>
<gene>
    <name evidence="1" type="primary">smpB</name>
</gene>
<protein>
    <recommendedName>
        <fullName evidence="1">SsrA-binding protein</fullName>
    </recommendedName>
    <alternativeName>
        <fullName evidence="1">Small protein B</fullName>
    </alternativeName>
</protein>
<sequence length="160" mass="18199">MAKQKKHPQGNIAQNKKALHDYFIEQKFEAGLALSGWEVKSLRAGKAQLVDSYVLLKDGEAWLMGSHITPLKTASTHVIADPTRTRKLLLHKRELGRLFGSVQQKGYACVALSLYWKKHLIKCEIALAKGKKEYDKRDTEKARDSDREIQRAIRSKGKED</sequence>
<evidence type="ECO:0000255" key="1">
    <source>
        <dbReference type="HAMAP-Rule" id="MF_00023"/>
    </source>
</evidence>
<evidence type="ECO:0000256" key="2">
    <source>
        <dbReference type="SAM" id="MobiDB-lite"/>
    </source>
</evidence>